<evidence type="ECO:0000255" key="1">
    <source>
        <dbReference type="HAMAP-Rule" id="MF_00082"/>
    </source>
</evidence>
<organism>
    <name type="scientific">Bacillus cereus (strain AH187)</name>
    <dbReference type="NCBI Taxonomy" id="405534"/>
    <lineage>
        <taxon>Bacteria</taxon>
        <taxon>Bacillati</taxon>
        <taxon>Bacillota</taxon>
        <taxon>Bacilli</taxon>
        <taxon>Bacillales</taxon>
        <taxon>Bacillaceae</taxon>
        <taxon>Bacillus</taxon>
        <taxon>Bacillus cereus group</taxon>
    </lineage>
</organism>
<protein>
    <recommendedName>
        <fullName evidence="1">Acetylglutamate kinase</fullName>
        <ecNumber evidence="1">2.7.2.8</ecNumber>
    </recommendedName>
    <alternativeName>
        <fullName evidence="1">N-acetyl-L-glutamate 5-phosphotransferase</fullName>
    </alternativeName>
    <alternativeName>
        <fullName evidence="1">NAG kinase</fullName>
        <shortName evidence="1">NAGK</shortName>
    </alternativeName>
</protein>
<reference key="1">
    <citation type="submission" date="2008-10" db="EMBL/GenBank/DDBJ databases">
        <title>Genome sequence of Bacillus cereus AH187.</title>
        <authorList>
            <person name="Dodson R.J."/>
            <person name="Durkin A.S."/>
            <person name="Rosovitz M.J."/>
            <person name="Rasko D.A."/>
            <person name="Kolsto A.B."/>
            <person name="Okstad O.A."/>
            <person name="Ravel J."/>
            <person name="Sutton G."/>
        </authorList>
    </citation>
    <scope>NUCLEOTIDE SEQUENCE [LARGE SCALE GENOMIC DNA]</scope>
    <source>
        <strain>AH187</strain>
    </source>
</reference>
<sequence>MSDYIVVKCGGSMLDQLNDLFFDCIKKLQQKYKVVIVHGGGPEIDAQLKDCNINAEKRDGLRVTPKEVMDVVQMVLCGSTNKKLVMNLQKHNLRAVGCSGCDGNLLQVQPVSEEIGYVGEVRYVETALLKGLINMNYIPVIAPVGINDNEIYNINADTAAAGIAAALSAKELIFITDVDGVLHEGKLVKKTDEFEIVNFIENGVITGGMIPKVQAALASLKMGVQKVSIVNGTKDFTEVTGECIGTTVTRGVSIA</sequence>
<dbReference type="EC" id="2.7.2.8" evidence="1"/>
<dbReference type="EMBL" id="CP001177">
    <property type="protein sequence ID" value="ACJ82255.1"/>
    <property type="molecule type" value="Genomic_DNA"/>
</dbReference>
<dbReference type="SMR" id="B7HNP7"/>
<dbReference type="KEGG" id="bcr:BCAH187_A4264"/>
<dbReference type="HOGENOM" id="CLU_053680_1_0_9"/>
<dbReference type="UniPathway" id="UPA00068">
    <property type="reaction ID" value="UER00107"/>
</dbReference>
<dbReference type="Proteomes" id="UP000002214">
    <property type="component" value="Chromosome"/>
</dbReference>
<dbReference type="GO" id="GO:0005737">
    <property type="term" value="C:cytoplasm"/>
    <property type="evidence" value="ECO:0007669"/>
    <property type="project" value="UniProtKB-SubCell"/>
</dbReference>
<dbReference type="GO" id="GO:0003991">
    <property type="term" value="F:acetylglutamate kinase activity"/>
    <property type="evidence" value="ECO:0007669"/>
    <property type="project" value="UniProtKB-UniRule"/>
</dbReference>
<dbReference type="GO" id="GO:0005524">
    <property type="term" value="F:ATP binding"/>
    <property type="evidence" value="ECO:0007669"/>
    <property type="project" value="UniProtKB-UniRule"/>
</dbReference>
<dbReference type="GO" id="GO:0042450">
    <property type="term" value="P:arginine biosynthetic process via ornithine"/>
    <property type="evidence" value="ECO:0007669"/>
    <property type="project" value="UniProtKB-UniRule"/>
</dbReference>
<dbReference type="GO" id="GO:0006526">
    <property type="term" value="P:L-arginine biosynthetic process"/>
    <property type="evidence" value="ECO:0007669"/>
    <property type="project" value="UniProtKB-UniPathway"/>
</dbReference>
<dbReference type="CDD" id="cd04238">
    <property type="entry name" value="AAK_NAGK-like"/>
    <property type="match status" value="1"/>
</dbReference>
<dbReference type="FunFam" id="3.40.1160.10:FF:000034">
    <property type="entry name" value="Acetylglutamate kinase"/>
    <property type="match status" value="1"/>
</dbReference>
<dbReference type="Gene3D" id="3.40.1160.10">
    <property type="entry name" value="Acetylglutamate kinase-like"/>
    <property type="match status" value="1"/>
</dbReference>
<dbReference type="HAMAP" id="MF_00082">
    <property type="entry name" value="ArgB"/>
    <property type="match status" value="1"/>
</dbReference>
<dbReference type="InterPro" id="IPR036393">
    <property type="entry name" value="AceGlu_kinase-like_sf"/>
</dbReference>
<dbReference type="InterPro" id="IPR004662">
    <property type="entry name" value="AcgluKinase_fam"/>
</dbReference>
<dbReference type="InterPro" id="IPR037528">
    <property type="entry name" value="ArgB"/>
</dbReference>
<dbReference type="InterPro" id="IPR001048">
    <property type="entry name" value="Asp/Glu/Uridylate_kinase"/>
</dbReference>
<dbReference type="NCBIfam" id="TIGR00761">
    <property type="entry name" value="argB"/>
    <property type="match status" value="1"/>
</dbReference>
<dbReference type="PANTHER" id="PTHR23342">
    <property type="entry name" value="N-ACETYLGLUTAMATE SYNTHASE"/>
    <property type="match status" value="1"/>
</dbReference>
<dbReference type="PANTHER" id="PTHR23342:SF0">
    <property type="entry name" value="N-ACETYLGLUTAMATE SYNTHASE, MITOCHONDRIAL"/>
    <property type="match status" value="1"/>
</dbReference>
<dbReference type="Pfam" id="PF00696">
    <property type="entry name" value="AA_kinase"/>
    <property type="match status" value="1"/>
</dbReference>
<dbReference type="PIRSF" id="PIRSF000728">
    <property type="entry name" value="NAGK"/>
    <property type="match status" value="1"/>
</dbReference>
<dbReference type="SUPFAM" id="SSF53633">
    <property type="entry name" value="Carbamate kinase-like"/>
    <property type="match status" value="1"/>
</dbReference>
<feature type="chain" id="PRO_1000117119" description="Acetylglutamate kinase">
    <location>
        <begin position="1"/>
        <end position="255"/>
    </location>
</feature>
<feature type="binding site" evidence="1">
    <location>
        <begin position="40"/>
        <end position="41"/>
    </location>
    <ligand>
        <name>substrate</name>
    </ligand>
</feature>
<feature type="binding site" evidence="1">
    <location>
        <position position="62"/>
    </location>
    <ligand>
        <name>substrate</name>
    </ligand>
</feature>
<feature type="binding site" evidence="1">
    <location>
        <position position="153"/>
    </location>
    <ligand>
        <name>substrate</name>
    </ligand>
</feature>
<feature type="site" description="Transition state stabilizer" evidence="1">
    <location>
        <position position="8"/>
    </location>
</feature>
<feature type="site" description="Transition state stabilizer" evidence="1">
    <location>
        <position position="212"/>
    </location>
</feature>
<keyword id="KW-0028">Amino-acid biosynthesis</keyword>
<keyword id="KW-0055">Arginine biosynthesis</keyword>
<keyword id="KW-0067">ATP-binding</keyword>
<keyword id="KW-0963">Cytoplasm</keyword>
<keyword id="KW-0418">Kinase</keyword>
<keyword id="KW-0547">Nucleotide-binding</keyword>
<keyword id="KW-0808">Transferase</keyword>
<comment type="function">
    <text evidence="1">Catalyzes the ATP-dependent phosphorylation of N-acetyl-L-glutamate.</text>
</comment>
<comment type="catalytic activity">
    <reaction evidence="1">
        <text>N-acetyl-L-glutamate + ATP = N-acetyl-L-glutamyl 5-phosphate + ADP</text>
        <dbReference type="Rhea" id="RHEA:14629"/>
        <dbReference type="ChEBI" id="CHEBI:30616"/>
        <dbReference type="ChEBI" id="CHEBI:44337"/>
        <dbReference type="ChEBI" id="CHEBI:57936"/>
        <dbReference type="ChEBI" id="CHEBI:456216"/>
        <dbReference type="EC" id="2.7.2.8"/>
    </reaction>
</comment>
<comment type="pathway">
    <text evidence="1">Amino-acid biosynthesis; L-arginine biosynthesis; N(2)-acetyl-L-ornithine from L-glutamate: step 2/4.</text>
</comment>
<comment type="subcellular location">
    <subcellularLocation>
        <location evidence="1">Cytoplasm</location>
    </subcellularLocation>
</comment>
<comment type="similarity">
    <text evidence="1">Belongs to the acetylglutamate kinase family. ArgB subfamily.</text>
</comment>
<gene>
    <name evidence="1" type="primary">argB</name>
    <name type="ordered locus">BCAH187_A4264</name>
</gene>
<accession>B7HNP7</accession>
<name>ARGB_BACC7</name>
<proteinExistence type="inferred from homology"/>